<name>PEX5_DICDI</name>
<proteinExistence type="inferred from homology"/>
<protein>
    <recommendedName>
        <fullName>Peroxisomal targeting signal 1 receptor</fullName>
        <shortName>PTS1 receptor</shortName>
        <shortName>PTS1R</shortName>
    </recommendedName>
    <alternativeName>
        <fullName>Peroxin-5</fullName>
    </alternativeName>
</protein>
<accession>Q54MD1</accession>
<organism>
    <name type="scientific">Dictyostelium discoideum</name>
    <name type="common">Social amoeba</name>
    <dbReference type="NCBI Taxonomy" id="44689"/>
    <lineage>
        <taxon>Eukaryota</taxon>
        <taxon>Amoebozoa</taxon>
        <taxon>Evosea</taxon>
        <taxon>Eumycetozoa</taxon>
        <taxon>Dictyostelia</taxon>
        <taxon>Dictyosteliales</taxon>
        <taxon>Dictyosteliaceae</taxon>
        <taxon>Dictyostelium</taxon>
    </lineage>
</organism>
<feature type="chain" id="PRO_0000330930" description="Peroxisomal targeting signal 1 receptor">
    <location>
        <begin position="1"/>
        <end position="641"/>
    </location>
</feature>
<feature type="repeat" description="TPR 1">
    <location>
        <begin position="359"/>
        <end position="392"/>
    </location>
</feature>
<feature type="repeat" description="TPR 2">
    <location>
        <begin position="393"/>
        <end position="426"/>
    </location>
</feature>
<feature type="repeat" description="TPR 3">
    <location>
        <begin position="427"/>
        <end position="460"/>
    </location>
</feature>
<feature type="repeat" description="TPR 4">
    <location>
        <begin position="503"/>
        <end position="536"/>
    </location>
</feature>
<feature type="repeat" description="TPR 5">
    <location>
        <begin position="538"/>
        <end position="570"/>
    </location>
</feature>
<feature type="repeat" description="TPR 6">
    <location>
        <begin position="571"/>
        <end position="604"/>
    </location>
</feature>
<feature type="region of interest" description="Amphipathic helix 1 (AH1)" evidence="1">
    <location>
        <begin position="12"/>
        <end position="34"/>
    </location>
</feature>
<feature type="region of interest" description="Amphipathic helix 2 (AH2)" evidence="1">
    <location>
        <begin position="74"/>
        <end position="92"/>
    </location>
</feature>
<feature type="region of interest" description="Amphipathic helix 4 (AH4)" evidence="1">
    <location>
        <begin position="261"/>
        <end position="288"/>
    </location>
</feature>
<feature type="short sequence motif" description="WxxxF/Y motif" evidence="1">
    <location>
        <begin position="331"/>
        <end position="335"/>
    </location>
</feature>
<feature type="cross-link" description="Glycyl cysteine thioester (Cys-Gly) (interchain with G-Cter in ubiquitin)" evidence="3">
    <location>
        <position position="12"/>
    </location>
</feature>
<reference key="1">
    <citation type="journal article" date="2005" name="Nature">
        <title>The genome of the social amoeba Dictyostelium discoideum.</title>
        <authorList>
            <person name="Eichinger L."/>
            <person name="Pachebat J.A."/>
            <person name="Gloeckner G."/>
            <person name="Rajandream M.A."/>
            <person name="Sucgang R."/>
            <person name="Berriman M."/>
            <person name="Song J."/>
            <person name="Olsen R."/>
            <person name="Szafranski K."/>
            <person name="Xu Q."/>
            <person name="Tunggal B."/>
            <person name="Kummerfeld S."/>
            <person name="Madera M."/>
            <person name="Konfortov B.A."/>
            <person name="Rivero F."/>
            <person name="Bankier A.T."/>
            <person name="Lehmann R."/>
            <person name="Hamlin N."/>
            <person name="Davies R."/>
            <person name="Gaudet P."/>
            <person name="Fey P."/>
            <person name="Pilcher K."/>
            <person name="Chen G."/>
            <person name="Saunders D."/>
            <person name="Sodergren E.J."/>
            <person name="Davis P."/>
            <person name="Kerhornou A."/>
            <person name="Nie X."/>
            <person name="Hall N."/>
            <person name="Anjard C."/>
            <person name="Hemphill L."/>
            <person name="Bason N."/>
            <person name="Farbrother P."/>
            <person name="Desany B."/>
            <person name="Just E."/>
            <person name="Morio T."/>
            <person name="Rost R."/>
            <person name="Churcher C.M."/>
            <person name="Cooper J."/>
            <person name="Haydock S."/>
            <person name="van Driessche N."/>
            <person name="Cronin A."/>
            <person name="Goodhead I."/>
            <person name="Muzny D.M."/>
            <person name="Mourier T."/>
            <person name="Pain A."/>
            <person name="Lu M."/>
            <person name="Harper D."/>
            <person name="Lindsay R."/>
            <person name="Hauser H."/>
            <person name="James K.D."/>
            <person name="Quiles M."/>
            <person name="Madan Babu M."/>
            <person name="Saito T."/>
            <person name="Buchrieser C."/>
            <person name="Wardroper A."/>
            <person name="Felder M."/>
            <person name="Thangavelu M."/>
            <person name="Johnson D."/>
            <person name="Knights A."/>
            <person name="Loulseged H."/>
            <person name="Mungall K.L."/>
            <person name="Oliver K."/>
            <person name="Price C."/>
            <person name="Quail M.A."/>
            <person name="Urushihara H."/>
            <person name="Hernandez J."/>
            <person name="Rabbinowitsch E."/>
            <person name="Steffen D."/>
            <person name="Sanders M."/>
            <person name="Ma J."/>
            <person name="Kohara Y."/>
            <person name="Sharp S."/>
            <person name="Simmonds M.N."/>
            <person name="Spiegler S."/>
            <person name="Tivey A."/>
            <person name="Sugano S."/>
            <person name="White B."/>
            <person name="Walker D."/>
            <person name="Woodward J.R."/>
            <person name="Winckler T."/>
            <person name="Tanaka Y."/>
            <person name="Shaulsky G."/>
            <person name="Schleicher M."/>
            <person name="Weinstock G.M."/>
            <person name="Rosenthal A."/>
            <person name="Cox E.C."/>
            <person name="Chisholm R.L."/>
            <person name="Gibbs R.A."/>
            <person name="Loomis W.F."/>
            <person name="Platzer M."/>
            <person name="Kay R.R."/>
            <person name="Williams J.G."/>
            <person name="Dear P.H."/>
            <person name="Noegel A.A."/>
            <person name="Barrell B.G."/>
            <person name="Kuspa A."/>
        </authorList>
    </citation>
    <scope>NUCLEOTIDE SEQUENCE [LARGE SCALE GENOMIC DNA]</scope>
    <source>
        <strain>AX4</strain>
    </source>
</reference>
<evidence type="ECO:0000250" key="1">
    <source>
        <dbReference type="UniProtKB" id="A0A1L8FDW4"/>
    </source>
</evidence>
<evidence type="ECO:0000250" key="2">
    <source>
        <dbReference type="UniProtKB" id="P35056"/>
    </source>
</evidence>
<evidence type="ECO:0000250" key="3">
    <source>
        <dbReference type="UniProtKB" id="P50542"/>
    </source>
</evidence>
<evidence type="ECO:0000305" key="4"/>
<gene>
    <name type="primary">pex5</name>
    <name type="ORF">DDB_G0286033</name>
</gene>
<sequence length="641" mass="74586">MSVFRDLVEGECSEPNALGNFVQHFTNERSYHDKFEDHGKNEFYDSLYRHEEEYNEQRHLDSIFDGEGQEDDIHLMMDRHLNLRDGPREHKELPLSNVESDLQFLFQDFINSTRAGQLFHPSSLNHLPLTFEDKSKIKNRSSIMLKHFSNGESEQFEEDQLNRMLDSLGIEVGDDFDQVWDSQPHHTTTTTTTTTTTTTGQYDQYQKYVNDLPEEYEDYEQHQQELFDDGDLEDYELDEEWDKGDDFHPYDSAWTESDRSVEAAWDETARRTISDITRPITQINDPKLKKSNFMKFMNQLNSGEASIVGSDVVHNPDFKRQEEYQQQADQWTEDYNDFHEHIPQHRIQEYQFSIQEARDSDTLERGMGLFNEGHLSDSIIALESEVKRNPENAMAWMYLGIAHAENDQDSQATTCLIKSLQIDPTNSKARLALAVSHTNDYQKERALDTLEEWLQRTPEYTALYKQFKGSVDPNSFLDTWSRHEFTTNLFIEAARSRPSNPDPEVQTALGLLYNMSYDYDKAVDCFKAALQNSPTDYQLWNKLGATLANSNRSQEALGAYFKALEHKPSYVRARSNLGISYLSLNMFQESATTFLGAIAIHPAPNIWDNLKMVFRLMNREDLVQKADLRDVNAFLDEFQFM</sequence>
<keyword id="KW-0963">Cytoplasm</keyword>
<keyword id="KW-0576">Peroxisome</keyword>
<keyword id="KW-0653">Protein transport</keyword>
<keyword id="KW-1185">Reference proteome</keyword>
<keyword id="KW-0677">Repeat</keyword>
<keyword id="KW-0882">Thioester bond</keyword>
<keyword id="KW-0802">TPR repeat</keyword>
<keyword id="KW-0811">Translocation</keyword>
<keyword id="KW-0813">Transport</keyword>
<keyword id="KW-0832">Ubl conjugation</keyword>
<dbReference type="EMBL" id="AAFI02000085">
    <property type="protein sequence ID" value="EAL64395.1"/>
    <property type="molecule type" value="Genomic_DNA"/>
</dbReference>
<dbReference type="RefSeq" id="XP_637903.1">
    <property type="nucleotide sequence ID" value="XM_632811.1"/>
</dbReference>
<dbReference type="SMR" id="Q54MD1"/>
<dbReference type="FunCoup" id="Q54MD1">
    <property type="interactions" value="63"/>
</dbReference>
<dbReference type="STRING" id="44689.Q54MD1"/>
<dbReference type="PaxDb" id="44689-DDB0238048"/>
<dbReference type="EnsemblProtists" id="EAL64395">
    <property type="protein sequence ID" value="EAL64395"/>
    <property type="gene ID" value="DDB_G0286033"/>
</dbReference>
<dbReference type="GeneID" id="8625414"/>
<dbReference type="KEGG" id="ddi:DDB_G0286033"/>
<dbReference type="dictyBase" id="DDB_G0286033">
    <property type="gene designation" value="pex5"/>
</dbReference>
<dbReference type="VEuPathDB" id="AmoebaDB:DDB_G0286033"/>
<dbReference type="eggNOG" id="KOG1125">
    <property type="taxonomic scope" value="Eukaryota"/>
</dbReference>
<dbReference type="HOGENOM" id="CLU_013516_4_0_1"/>
<dbReference type="InParanoid" id="Q54MD1"/>
<dbReference type="OMA" id="KMVFRLM"/>
<dbReference type="PhylomeDB" id="Q54MD1"/>
<dbReference type="Reactome" id="R-DDI-8866654">
    <property type="pathway name" value="E3 ubiquitin ligases ubiquitinate target proteins"/>
</dbReference>
<dbReference type="Reactome" id="R-DDI-9033241">
    <property type="pathway name" value="Peroxisomal protein import"/>
</dbReference>
<dbReference type="Reactome" id="R-DDI-9664873">
    <property type="pathway name" value="Pexophagy"/>
</dbReference>
<dbReference type="PRO" id="PR:Q54MD1"/>
<dbReference type="Proteomes" id="UP000002195">
    <property type="component" value="Chromosome 4"/>
</dbReference>
<dbReference type="GO" id="GO:0005829">
    <property type="term" value="C:cytosol"/>
    <property type="evidence" value="ECO:0000318"/>
    <property type="project" value="GO_Central"/>
</dbReference>
<dbReference type="GO" id="GO:0005782">
    <property type="term" value="C:peroxisomal matrix"/>
    <property type="evidence" value="ECO:0007669"/>
    <property type="project" value="UniProtKB-SubCell"/>
</dbReference>
<dbReference type="GO" id="GO:0005778">
    <property type="term" value="C:peroxisomal membrane"/>
    <property type="evidence" value="ECO:0000318"/>
    <property type="project" value="GO_Central"/>
</dbReference>
<dbReference type="GO" id="GO:0005777">
    <property type="term" value="C:peroxisome"/>
    <property type="evidence" value="ECO:0000250"/>
    <property type="project" value="dictyBase"/>
</dbReference>
<dbReference type="GO" id="GO:0005052">
    <property type="term" value="F:peroxisome matrix targeting signal-1 binding"/>
    <property type="evidence" value="ECO:0000318"/>
    <property type="project" value="GO_Central"/>
</dbReference>
<dbReference type="GO" id="GO:0000268">
    <property type="term" value="F:peroxisome targeting sequence binding"/>
    <property type="evidence" value="ECO:0000250"/>
    <property type="project" value="dictyBase"/>
</dbReference>
<dbReference type="GO" id="GO:0007031">
    <property type="term" value="P:peroxisome organization"/>
    <property type="evidence" value="ECO:0000250"/>
    <property type="project" value="dictyBase"/>
</dbReference>
<dbReference type="GO" id="GO:0016560">
    <property type="term" value="P:protein import into peroxisome matrix, docking"/>
    <property type="evidence" value="ECO:0000318"/>
    <property type="project" value="GO_Central"/>
</dbReference>
<dbReference type="GO" id="GO:0006625">
    <property type="term" value="P:protein targeting to peroxisome"/>
    <property type="evidence" value="ECO:0000250"/>
    <property type="project" value="dictyBase"/>
</dbReference>
<dbReference type="FunFam" id="1.25.40.10:FF:002671">
    <property type="entry name" value="Peroxisomal targeting signal 1 receptor"/>
    <property type="match status" value="1"/>
</dbReference>
<dbReference type="Gene3D" id="1.25.40.10">
    <property type="entry name" value="Tetratricopeptide repeat domain"/>
    <property type="match status" value="1"/>
</dbReference>
<dbReference type="InterPro" id="IPR024111">
    <property type="entry name" value="PEX5/PEX5L"/>
</dbReference>
<dbReference type="InterPro" id="IPR011990">
    <property type="entry name" value="TPR-like_helical_dom_sf"/>
</dbReference>
<dbReference type="InterPro" id="IPR019734">
    <property type="entry name" value="TPR_rpt"/>
</dbReference>
<dbReference type="PANTHER" id="PTHR10130:SF0">
    <property type="entry name" value="GH08708P"/>
    <property type="match status" value="1"/>
</dbReference>
<dbReference type="PANTHER" id="PTHR10130">
    <property type="entry name" value="PEROXISOMAL TARGETING SIGNAL 1 RECEPTOR PEX5"/>
    <property type="match status" value="1"/>
</dbReference>
<dbReference type="Pfam" id="PF13432">
    <property type="entry name" value="TPR_16"/>
    <property type="match status" value="1"/>
</dbReference>
<dbReference type="Pfam" id="PF13431">
    <property type="entry name" value="TPR_17"/>
    <property type="match status" value="1"/>
</dbReference>
<dbReference type="SMART" id="SM00028">
    <property type="entry name" value="TPR"/>
    <property type="match status" value="5"/>
</dbReference>
<dbReference type="SUPFAM" id="SSF48452">
    <property type="entry name" value="TPR-like"/>
    <property type="match status" value="1"/>
</dbReference>
<dbReference type="PROSITE" id="PS50005">
    <property type="entry name" value="TPR"/>
    <property type="match status" value="5"/>
</dbReference>
<dbReference type="PROSITE" id="PS50293">
    <property type="entry name" value="TPR_REGION"/>
    <property type="match status" value="1"/>
</dbReference>
<comment type="function">
    <text evidence="1">Receptor that mediates peroxisomal import of proteins containing a C-terminal PTS1-type tripeptide peroxisomal targeting signal (SKL-type). Binds to cargo proteins containing a PTS1 peroxisomal targeting signal in the cytosol, and translocates them into the peroxisome matrix by passing through the PEX13-PEX14 docking complex along with cargo proteins. PEX5 receptor is then retrotranslocated into the cytosol, leading to release of bound cargo in the peroxisome matrix, and reset for a subsequent peroxisome import cycle.</text>
</comment>
<comment type="function">
    <text evidence="3">In addition to promoting peroxisomal translocation of proteins containing a PTS1 peroxisomal targeting signal, mediates peroxisomal import of proteins containing a C-terminal PTS2-type peroxisomal targeting signal via its interaction with PEX7. Interaction with PEX7 only takes place when PEX7 is associated with cargo proteins containing a PTS2 peroxisomal targeting signal. PEX7 along with PTS2-containing cargo proteins are then translocated through the PEX13-PEX14 docking complex together with PEX5.</text>
</comment>
<comment type="subunit">
    <text evidence="1 3">Interacts (via WxxxF/Y and LVxEF motifs) with PEX14; promoting translocation through the PEX13-PEX14 docking complex (By similarity). Interacts with PEX7, promoting peroxisomal import of proteins containing a C-terminal PTS2-type peroxisomal targeting signal (By similarity).</text>
</comment>
<comment type="subcellular location">
    <subcellularLocation>
        <location evidence="1">Cytoplasm</location>
        <location evidence="1">Cytosol</location>
    </subcellularLocation>
    <subcellularLocation>
        <location evidence="1">Peroxisome matrix</location>
    </subcellularLocation>
    <text evidence="1">Cycles between the cytosol and the peroxisome matrix. Following binding to cargo proteins containing a PTS1 peroxisomal targeting signal in the cytosol, recruited to the docking complex, composed of PEX13 and PEX14, leading to translocation into the peroxisome matrix along with cargo proteins. Export and recycling to the cytosol is initiated by binding to the PEX2-PEX10-PEX12 ligase complex via its unstructured N-terminus that inserts into the ligase pore and emerges in the cytosol. Cys-12 of PEX5 is then monoubiquitinated, promoting its extraction from peroxisomal membrane by the PEX1-PEX6 AAA ATPase complex. Extraction is accompanied by unfolding of the TPR repeats and release of bound cargo in the peroxisome matrix. The TPR repeats refold in the cytosol and ubiquitination is removed by deubiquitinating enzymes, resetting PEX5 for a subsequent import cycle.</text>
</comment>
<comment type="domain">
    <text evidence="1">The TPR repeats mediate interaction with proteins containing a C-terminal PTS1-type tripeptide peroxisomal targeting signal (SKL-type).</text>
</comment>
<comment type="domain">
    <text evidence="1">The WxxxF/Y motifs mediate interaction with PEX14, promoting association with the PEX13-PEX14 docking complex.</text>
</comment>
<comment type="domain">
    <text evidence="1">The amphipathic helix 1 and 2 (AH1 and AH2, respectively) are required for PEX5 retrotranslocation and recycling. AH2 mediates interaction with lumenal side of the PEX2-PEX10-PEX12 ligase complex, while AH1 is required for extraction from peroxisomal membrane by the PEX1-PEX6 AAA ATPase complex.</text>
</comment>
<comment type="PTM">
    <text evidence="1 2">Monoubiquitinated at Cys-12 by PEX2 during PEX5 passage through the retrotranslocation channel (By similarity). Cys-12 monoubiquitination acts as a recognition signal for the PEX1-PEX6 complex and is required for PEX5 extraction and export from peroxisomes. When PEX5 recycling is compromised, polyubiquitinated by PEX10 during its passage through the retrotranslocation channel, leading to its degradation (By similarity).</text>
</comment>
<comment type="similarity">
    <text evidence="4">Belongs to the peroxisomal targeting signal receptor family.</text>
</comment>